<accession>A6TXX3</accession>
<reference key="1">
    <citation type="submission" date="2007-06" db="EMBL/GenBank/DDBJ databases">
        <title>Complete sequence of chromosome of Staphylococcus aureus subsp. aureus JH1.</title>
        <authorList>
            <consortium name="US DOE Joint Genome Institute"/>
            <person name="Copeland A."/>
            <person name="Lucas S."/>
            <person name="Lapidus A."/>
            <person name="Barry K."/>
            <person name="Detter J.C."/>
            <person name="Glavina del Rio T."/>
            <person name="Hammon N."/>
            <person name="Israni S."/>
            <person name="Dalin E."/>
            <person name="Tice H."/>
            <person name="Pitluck S."/>
            <person name="Chain P."/>
            <person name="Malfatti S."/>
            <person name="Shin M."/>
            <person name="Vergez L."/>
            <person name="Schmutz J."/>
            <person name="Larimer F."/>
            <person name="Land M."/>
            <person name="Hauser L."/>
            <person name="Kyrpides N."/>
            <person name="Ivanova N."/>
            <person name="Tomasz A."/>
            <person name="Richardson P."/>
        </authorList>
    </citation>
    <scope>NUCLEOTIDE SEQUENCE [LARGE SCALE GENOMIC DNA]</scope>
    <source>
        <strain>JH1</strain>
    </source>
</reference>
<gene>
    <name type="primary">ptsG</name>
    <name type="synonym">glcA</name>
    <name type="ordered locus">SaurJH1_0179</name>
</gene>
<proteinExistence type="inferred from homology"/>
<organism>
    <name type="scientific">Staphylococcus aureus (strain JH1)</name>
    <dbReference type="NCBI Taxonomy" id="359787"/>
    <lineage>
        <taxon>Bacteria</taxon>
        <taxon>Bacillati</taxon>
        <taxon>Bacillota</taxon>
        <taxon>Bacilli</taxon>
        <taxon>Bacillales</taxon>
        <taxon>Staphylococcaceae</taxon>
        <taxon>Staphylococcus</taxon>
    </lineage>
</organism>
<protein>
    <recommendedName>
        <fullName evidence="1">PTS system glucose-specific EIICBA component</fullName>
        <ecNumber evidence="1">2.7.1.199</ecNumber>
    </recommendedName>
    <alternativeName>
        <fullName evidence="1">EIICBA-Glc</fullName>
        <shortName evidence="1">EII-Glc</shortName>
    </alternativeName>
    <alternativeName>
        <fullName evidence="5">EIICBA-Glc 1</fullName>
    </alternativeName>
    <domain>
        <recommendedName>
            <fullName evidence="1">Glucose permease IIC component</fullName>
        </recommendedName>
        <alternativeName>
            <fullName evidence="1">PTS system glucose-specific EIIC component</fullName>
        </alternativeName>
    </domain>
    <domain>
        <recommendedName>
            <fullName evidence="1">Glucose-specific phosphotransferase enzyme IIB component</fullName>
        </recommendedName>
        <alternativeName>
            <fullName evidence="1">PTS system glucose-specific EIIB component</fullName>
        </alternativeName>
    </domain>
    <domain>
        <recommendedName>
            <fullName evidence="1">Glucose-specific phosphotransferase enzyme IIA component</fullName>
        </recommendedName>
        <alternativeName>
            <fullName evidence="1">PTS system glucose-specific EIIA component</fullName>
        </alternativeName>
    </domain>
</protein>
<dbReference type="EC" id="2.7.1.199" evidence="1"/>
<dbReference type="EMBL" id="CP000736">
    <property type="protein sequence ID" value="ABR51041.1"/>
    <property type="molecule type" value="Genomic_DNA"/>
</dbReference>
<dbReference type="SMR" id="A6TXX3"/>
<dbReference type="KEGG" id="sah:SaurJH1_0179"/>
<dbReference type="HOGENOM" id="CLU_012312_1_1_9"/>
<dbReference type="GO" id="GO:0005886">
    <property type="term" value="C:plasma membrane"/>
    <property type="evidence" value="ECO:0007669"/>
    <property type="project" value="UniProtKB-SubCell"/>
</dbReference>
<dbReference type="GO" id="GO:0055056">
    <property type="term" value="F:D-glucose transmembrane transporter activity"/>
    <property type="evidence" value="ECO:0007669"/>
    <property type="project" value="InterPro"/>
</dbReference>
<dbReference type="GO" id="GO:0016301">
    <property type="term" value="F:kinase activity"/>
    <property type="evidence" value="ECO:0007669"/>
    <property type="project" value="UniProtKB-KW"/>
</dbReference>
<dbReference type="GO" id="GO:0008982">
    <property type="term" value="F:protein-N(PI)-phosphohistidine-sugar phosphotransferase activity"/>
    <property type="evidence" value="ECO:0007669"/>
    <property type="project" value="InterPro"/>
</dbReference>
<dbReference type="GO" id="GO:0090563">
    <property type="term" value="F:protein-phosphocysteine-sugar phosphotransferase activity"/>
    <property type="evidence" value="ECO:0007669"/>
    <property type="project" value="TreeGrafter"/>
</dbReference>
<dbReference type="GO" id="GO:1904659">
    <property type="term" value="P:D-glucose transmembrane transport"/>
    <property type="evidence" value="ECO:0007669"/>
    <property type="project" value="InterPro"/>
</dbReference>
<dbReference type="GO" id="GO:0009401">
    <property type="term" value="P:phosphoenolpyruvate-dependent sugar phosphotransferase system"/>
    <property type="evidence" value="ECO:0007669"/>
    <property type="project" value="UniProtKB-KW"/>
</dbReference>
<dbReference type="CDD" id="cd00210">
    <property type="entry name" value="PTS_IIA_glc"/>
    <property type="match status" value="1"/>
</dbReference>
<dbReference type="CDD" id="cd00212">
    <property type="entry name" value="PTS_IIB_glc"/>
    <property type="match status" value="1"/>
</dbReference>
<dbReference type="FunFam" id="2.70.70.10:FF:000001">
    <property type="entry name" value="PTS system glucose-specific IIA component"/>
    <property type="match status" value="1"/>
</dbReference>
<dbReference type="FunFam" id="3.30.1360.60:FF:000001">
    <property type="entry name" value="PTS system glucose-specific IIBC component PtsG"/>
    <property type="match status" value="1"/>
</dbReference>
<dbReference type="Gene3D" id="2.70.70.10">
    <property type="entry name" value="Glucose Permease (Domain IIA)"/>
    <property type="match status" value="1"/>
</dbReference>
<dbReference type="Gene3D" id="3.30.1360.60">
    <property type="entry name" value="Glucose permease domain IIB"/>
    <property type="match status" value="1"/>
</dbReference>
<dbReference type="InterPro" id="IPR011055">
    <property type="entry name" value="Dup_hybrid_motif"/>
</dbReference>
<dbReference type="InterPro" id="IPR036878">
    <property type="entry name" value="Glu_permease_IIB"/>
</dbReference>
<dbReference type="InterPro" id="IPR018113">
    <property type="entry name" value="PTrfase_EIIB_Cys"/>
</dbReference>
<dbReference type="InterPro" id="IPR001127">
    <property type="entry name" value="PTS_EIIA_1_perm"/>
</dbReference>
<dbReference type="InterPro" id="IPR003352">
    <property type="entry name" value="PTS_EIIC"/>
</dbReference>
<dbReference type="InterPro" id="IPR013013">
    <property type="entry name" value="PTS_EIIC_1"/>
</dbReference>
<dbReference type="InterPro" id="IPR050429">
    <property type="entry name" value="PTS_Glucose_EIICBA"/>
</dbReference>
<dbReference type="InterPro" id="IPR001996">
    <property type="entry name" value="PTS_IIB_1"/>
</dbReference>
<dbReference type="InterPro" id="IPR011299">
    <property type="entry name" value="PTS_IIBC_glc"/>
</dbReference>
<dbReference type="NCBIfam" id="TIGR00826">
    <property type="entry name" value="EIIB_glc"/>
    <property type="match status" value="1"/>
</dbReference>
<dbReference type="NCBIfam" id="TIGR00830">
    <property type="entry name" value="PTBA"/>
    <property type="match status" value="1"/>
</dbReference>
<dbReference type="NCBIfam" id="TIGR02002">
    <property type="entry name" value="PTS-II-BC-glcB"/>
    <property type="match status" value="1"/>
</dbReference>
<dbReference type="PANTHER" id="PTHR30009">
    <property type="entry name" value="CYTOCHROME C-TYPE SYNTHESIS PROTEIN AND PTS TRANSMEMBRANE COMPONENT"/>
    <property type="match status" value="1"/>
</dbReference>
<dbReference type="PANTHER" id="PTHR30009:SF20">
    <property type="entry name" value="PTS SYSTEM GLUCOSE-SPECIFIC EIICB COMPONENT-RELATED"/>
    <property type="match status" value="1"/>
</dbReference>
<dbReference type="Pfam" id="PF00358">
    <property type="entry name" value="PTS_EIIA_1"/>
    <property type="match status" value="1"/>
</dbReference>
<dbReference type="Pfam" id="PF00367">
    <property type="entry name" value="PTS_EIIB"/>
    <property type="match status" value="1"/>
</dbReference>
<dbReference type="Pfam" id="PF02378">
    <property type="entry name" value="PTS_EIIC"/>
    <property type="match status" value="1"/>
</dbReference>
<dbReference type="SUPFAM" id="SSF51261">
    <property type="entry name" value="Duplicated hybrid motif"/>
    <property type="match status" value="1"/>
</dbReference>
<dbReference type="SUPFAM" id="SSF55604">
    <property type="entry name" value="Glucose permease domain IIB"/>
    <property type="match status" value="1"/>
</dbReference>
<dbReference type="PROSITE" id="PS51093">
    <property type="entry name" value="PTS_EIIA_TYPE_1"/>
    <property type="match status" value="1"/>
</dbReference>
<dbReference type="PROSITE" id="PS00371">
    <property type="entry name" value="PTS_EIIA_TYPE_1_HIS"/>
    <property type="match status" value="1"/>
</dbReference>
<dbReference type="PROSITE" id="PS51098">
    <property type="entry name" value="PTS_EIIB_TYPE_1"/>
    <property type="match status" value="1"/>
</dbReference>
<dbReference type="PROSITE" id="PS01035">
    <property type="entry name" value="PTS_EIIB_TYPE_1_CYS"/>
    <property type="match status" value="1"/>
</dbReference>
<dbReference type="PROSITE" id="PS51103">
    <property type="entry name" value="PTS_EIIC_TYPE_1"/>
    <property type="match status" value="1"/>
</dbReference>
<keyword id="KW-1003">Cell membrane</keyword>
<keyword id="KW-0418">Kinase</keyword>
<keyword id="KW-0472">Membrane</keyword>
<keyword id="KW-0598">Phosphotransferase system</keyword>
<keyword id="KW-0762">Sugar transport</keyword>
<keyword id="KW-0808">Transferase</keyword>
<keyword id="KW-0812">Transmembrane</keyword>
<keyword id="KW-1133">Transmembrane helix</keyword>
<keyword id="KW-0813">Transport</keyword>
<comment type="function">
    <text evidence="1">The phosphoenolpyruvate-dependent sugar phosphotransferase system (sugar PTS), a major carbohydrate active transport system, catalyzes the phosphorylation of incoming sugar substrates concomitantly with their translocation across the cell membrane. This system is involved in glucose transport.</text>
</comment>
<comment type="catalytic activity">
    <reaction evidence="1">
        <text>N(pros)-phospho-L-histidyl-[protein] + D-glucose(out) = D-glucose 6-phosphate(in) + L-histidyl-[protein]</text>
        <dbReference type="Rhea" id="RHEA:33367"/>
        <dbReference type="Rhea" id="RHEA-COMP:9745"/>
        <dbReference type="Rhea" id="RHEA-COMP:9746"/>
        <dbReference type="ChEBI" id="CHEBI:4167"/>
        <dbReference type="ChEBI" id="CHEBI:29979"/>
        <dbReference type="ChEBI" id="CHEBI:61548"/>
        <dbReference type="ChEBI" id="CHEBI:64837"/>
        <dbReference type="EC" id="2.7.1.199"/>
    </reaction>
</comment>
<comment type="subcellular location">
    <subcellularLocation>
        <location evidence="4">Cell membrane</location>
        <topology evidence="4">Multi-pass membrane protein</topology>
    </subcellularLocation>
</comment>
<comment type="domain">
    <text evidence="4">The EIIC domain forms the PTS system translocation channel and contains the specific substrate-binding site.</text>
</comment>
<comment type="domain">
    <text evidence="3">The EIIB domain is phosphorylated by phospho-EIIA on a cysteinyl or histidyl residue, depending on the transported sugar. Then, it transfers the phosphoryl group to the sugar substrate concomitantly with the sugar uptake processed by the EIIC domain.</text>
</comment>
<comment type="domain">
    <text evidence="2">The EIIA domain is phosphorylated by phospho-HPr on a histidyl residue. Then, it transfers the phosphoryl group to the EIIB domain.</text>
</comment>
<sequence length="681" mass="73958">MRKKLFGQLQRIGKALMLPVAILPAAGLLLAIGTAIQGEALQHYLPFIQNGGVQNVAKLMTAAGSIIFENLPMIFALGVAIGLAGGDGVAAIAAFVGYIIMNKTMGDFLQVTPKNVTDPASGYASILGIPTLQTGVFGGIIIGALAAWCYNKFYNINLPSYLGFFAGKRFVPIMMATTSFILAFPMALIWPTIQSGLNAFSTGLLDSNTGVAVFLFGFIKRLLIPFGLHHIFHAPFWFEFGSWKNAAGEIIHGDQRIFIEQIREGAHLTAGKFMQGEFPVMMFGLPAAALAIYHTAKPENKKVVAGLMGSAALTSFLTGITEPLEFSFLFVAPLLFFIHAVLDGLSFLTLYLLDVHLGYTFSGGFIDYVLLGVLPNKTQWWLVIPVGLVYAVIYYFVFRFLIVKLKYKTPGREDKQSQAVTASATELPYAVLEAMGGKANIKHLDACITRLRVEVNDKSKVDVPGLKDLGASGVLEVGNNMQAIFGPKSDQIKHEMQQIMNGQVVENPTTMEDDKDETVVVAEDKSATSELSHIVHAPLTGEVTPLSEVPDQVFSEKMMGDGIAIKPSQGEVRAPFNGKIQMIFPTKHAIGLVSDSGLELLIHIGLDTVKLNGEGFTLHVEEGQEVKQGDLLINFDLDYIRNHAKSDITPIIVTQGNITNLDFKQGEHGNISFGDQLFEAK</sequence>
<evidence type="ECO:0000250" key="1">
    <source>
        <dbReference type="UniProtKB" id="Q57071"/>
    </source>
</evidence>
<evidence type="ECO:0000255" key="2">
    <source>
        <dbReference type="PROSITE-ProRule" id="PRU00416"/>
    </source>
</evidence>
<evidence type="ECO:0000255" key="3">
    <source>
        <dbReference type="PROSITE-ProRule" id="PRU00421"/>
    </source>
</evidence>
<evidence type="ECO:0000255" key="4">
    <source>
        <dbReference type="PROSITE-ProRule" id="PRU00426"/>
    </source>
</evidence>
<evidence type="ECO:0000305" key="5"/>
<feature type="chain" id="PRO_5000256864" description="PTS system glucose-specific EIICBA component">
    <location>
        <begin position="1"/>
        <end position="681"/>
    </location>
</feature>
<feature type="transmembrane region" description="Helical" evidence="4">
    <location>
        <begin position="16"/>
        <end position="36"/>
    </location>
</feature>
<feature type="transmembrane region" description="Helical" evidence="4">
    <location>
        <begin position="73"/>
        <end position="93"/>
    </location>
</feature>
<feature type="transmembrane region" description="Helical" evidence="4">
    <location>
        <begin position="126"/>
        <end position="146"/>
    </location>
</feature>
<feature type="transmembrane region" description="Helical" evidence="4">
    <location>
        <begin position="170"/>
        <end position="190"/>
    </location>
</feature>
<feature type="transmembrane region" description="Helical" evidence="4">
    <location>
        <begin position="199"/>
        <end position="219"/>
    </location>
</feature>
<feature type="transmembrane region" description="Helical" evidence="4">
    <location>
        <begin position="273"/>
        <end position="293"/>
    </location>
</feature>
<feature type="transmembrane region" description="Helical" evidence="4">
    <location>
        <begin position="303"/>
        <end position="323"/>
    </location>
</feature>
<feature type="transmembrane region" description="Helical" evidence="4">
    <location>
        <begin position="328"/>
        <end position="348"/>
    </location>
</feature>
<feature type="transmembrane region" description="Helical" evidence="4">
    <location>
        <begin position="355"/>
        <end position="375"/>
    </location>
</feature>
<feature type="transmembrane region" description="Helical" evidence="4">
    <location>
        <begin position="383"/>
        <end position="403"/>
    </location>
</feature>
<feature type="domain" description="PTS EIIC type-1" evidence="4">
    <location>
        <begin position="3"/>
        <end position="414"/>
    </location>
</feature>
<feature type="domain" description="PTS EIIB type-1" evidence="3">
    <location>
        <begin position="425"/>
        <end position="506"/>
    </location>
</feature>
<feature type="domain" description="PTS EIIA type-1" evidence="2">
    <location>
        <begin position="551"/>
        <end position="655"/>
    </location>
</feature>
<feature type="active site" description="Phosphocysteine intermediate; for EIIB activity" evidence="3">
    <location>
        <position position="447"/>
    </location>
</feature>
<feature type="active site" description="Tele-phosphohistidine intermediate; for EIIA activity" evidence="2">
    <location>
        <position position="603"/>
    </location>
</feature>
<name>PTG3C_STAA2</name>